<comment type="function">
    <text evidence="1">Participates actively in the response to hyperosmotic and heat shock by preventing the aggregation of stress-denatured proteins and by disaggregating proteins, also in an autonomous, DnaK-independent fashion. Unfolded proteins bind initially to DnaJ; upon interaction with the DnaJ-bound protein, DnaK hydrolyzes its bound ATP, resulting in the formation of a stable complex. GrpE releases ADP from DnaK; ATP binding to DnaK triggers the release of the substrate protein, thus completing the reaction cycle. Several rounds of ATP-dependent interactions between DnaJ, DnaK and GrpE are required for fully efficient folding. Also involved, together with DnaK and GrpE, in the DNA replication of plasmids through activation of initiation proteins.</text>
</comment>
<comment type="cofactor">
    <cofactor evidence="1">
        <name>Zn(2+)</name>
        <dbReference type="ChEBI" id="CHEBI:29105"/>
    </cofactor>
    <text evidence="1">Binds 2 Zn(2+) ions per monomer.</text>
</comment>
<comment type="subunit">
    <text evidence="1">Homodimer.</text>
</comment>
<comment type="subcellular location">
    <subcellularLocation>
        <location evidence="1">Cytoplasm</location>
    </subcellularLocation>
</comment>
<comment type="domain">
    <text evidence="1">The J domain is necessary and sufficient to stimulate DnaK ATPase activity. Zinc center 1 plays an important role in the autonomous, DnaK-independent chaperone activity of DnaJ. Zinc center 2 is essential for interaction with DnaK and for DnaJ activity.</text>
</comment>
<comment type="similarity">
    <text evidence="1">Belongs to the DnaJ family.</text>
</comment>
<proteinExistence type="inferred from homology"/>
<accession>Q892R1</accession>
<feature type="chain" id="PRO_0000070764" description="Chaperone protein DnaJ">
    <location>
        <begin position="1"/>
        <end position="375"/>
    </location>
</feature>
<feature type="domain" description="J" evidence="1">
    <location>
        <begin position="5"/>
        <end position="70"/>
    </location>
</feature>
<feature type="repeat" description="CXXCXGXG motif">
    <location>
        <begin position="147"/>
        <end position="154"/>
    </location>
</feature>
<feature type="repeat" description="CXXCXGXG motif">
    <location>
        <begin position="164"/>
        <end position="171"/>
    </location>
</feature>
<feature type="repeat" description="CXXCXGXG motif">
    <location>
        <begin position="190"/>
        <end position="197"/>
    </location>
</feature>
<feature type="repeat" description="CXXCXGXG motif">
    <location>
        <begin position="204"/>
        <end position="211"/>
    </location>
</feature>
<feature type="zinc finger region" description="CR-type" evidence="1">
    <location>
        <begin position="134"/>
        <end position="216"/>
    </location>
</feature>
<feature type="binding site" evidence="1">
    <location>
        <position position="147"/>
    </location>
    <ligand>
        <name>Zn(2+)</name>
        <dbReference type="ChEBI" id="CHEBI:29105"/>
        <label>1</label>
    </ligand>
</feature>
<feature type="binding site" evidence="1">
    <location>
        <position position="150"/>
    </location>
    <ligand>
        <name>Zn(2+)</name>
        <dbReference type="ChEBI" id="CHEBI:29105"/>
        <label>1</label>
    </ligand>
</feature>
<feature type="binding site" evidence="1">
    <location>
        <position position="164"/>
    </location>
    <ligand>
        <name>Zn(2+)</name>
        <dbReference type="ChEBI" id="CHEBI:29105"/>
        <label>2</label>
    </ligand>
</feature>
<feature type="binding site" evidence="1">
    <location>
        <position position="167"/>
    </location>
    <ligand>
        <name>Zn(2+)</name>
        <dbReference type="ChEBI" id="CHEBI:29105"/>
        <label>2</label>
    </ligand>
</feature>
<feature type="binding site" evidence="1">
    <location>
        <position position="190"/>
    </location>
    <ligand>
        <name>Zn(2+)</name>
        <dbReference type="ChEBI" id="CHEBI:29105"/>
        <label>2</label>
    </ligand>
</feature>
<feature type="binding site" evidence="1">
    <location>
        <position position="193"/>
    </location>
    <ligand>
        <name>Zn(2+)</name>
        <dbReference type="ChEBI" id="CHEBI:29105"/>
        <label>2</label>
    </ligand>
</feature>
<feature type="binding site" evidence="1">
    <location>
        <position position="204"/>
    </location>
    <ligand>
        <name>Zn(2+)</name>
        <dbReference type="ChEBI" id="CHEBI:29105"/>
        <label>1</label>
    </ligand>
</feature>
<feature type="binding site" evidence="1">
    <location>
        <position position="207"/>
    </location>
    <ligand>
        <name>Zn(2+)</name>
        <dbReference type="ChEBI" id="CHEBI:29105"/>
        <label>1</label>
    </ligand>
</feature>
<sequence>MPKKDFYEVLGVEKGANDAEIKKAFRKLALKYHPDKNAGNKEAEERFKEINEAYQVLSDPQKRAQYDQFGTADFNGGGAGFSGFEDFDLGDIFESFFGGGFGGFGGSSRRRNGPQKGPDVQYSINLTFNEAVFGVEKEVSITKSETCETCTGTGAKPGTNSKTCPKCNGSGQIKVQRNTALGSFVSVNTCDMCGGKGTIISDPCSDCKGKGTVRKQKKIKVNIPAGVDTGNVIPIRGQGEAGVNGGPPGDLYISVRVMPDPFFKRRGDDIYIDQHISFAKASLGTELKVKTIDGEVKYDIPSGTQPGTVFRLKGKGVPHVNGRGRGDQYVNIIVDIPKSLNQKQKEALFAYMEASGEIQSSEKEGFFDKIKKNFK</sequence>
<dbReference type="EMBL" id="AE015927">
    <property type="protein sequence ID" value="AAO36533.1"/>
    <property type="molecule type" value="Genomic_DNA"/>
</dbReference>
<dbReference type="RefSeq" id="WP_011100191.1">
    <property type="nucleotide sequence ID" value="NC_004557.1"/>
</dbReference>
<dbReference type="SMR" id="Q892R1"/>
<dbReference type="STRING" id="212717.CTC_02030"/>
<dbReference type="GeneID" id="24254340"/>
<dbReference type="KEGG" id="ctc:CTC_02030"/>
<dbReference type="HOGENOM" id="CLU_017633_0_7_9"/>
<dbReference type="OrthoDB" id="9779889at2"/>
<dbReference type="Proteomes" id="UP000001412">
    <property type="component" value="Chromosome"/>
</dbReference>
<dbReference type="GO" id="GO:0005737">
    <property type="term" value="C:cytoplasm"/>
    <property type="evidence" value="ECO:0007669"/>
    <property type="project" value="UniProtKB-SubCell"/>
</dbReference>
<dbReference type="GO" id="GO:0005524">
    <property type="term" value="F:ATP binding"/>
    <property type="evidence" value="ECO:0007669"/>
    <property type="project" value="InterPro"/>
</dbReference>
<dbReference type="GO" id="GO:0031072">
    <property type="term" value="F:heat shock protein binding"/>
    <property type="evidence" value="ECO:0007669"/>
    <property type="project" value="InterPro"/>
</dbReference>
<dbReference type="GO" id="GO:0051082">
    <property type="term" value="F:unfolded protein binding"/>
    <property type="evidence" value="ECO:0007669"/>
    <property type="project" value="UniProtKB-UniRule"/>
</dbReference>
<dbReference type="GO" id="GO:0008270">
    <property type="term" value="F:zinc ion binding"/>
    <property type="evidence" value="ECO:0007669"/>
    <property type="project" value="UniProtKB-UniRule"/>
</dbReference>
<dbReference type="GO" id="GO:0051085">
    <property type="term" value="P:chaperone cofactor-dependent protein refolding"/>
    <property type="evidence" value="ECO:0007669"/>
    <property type="project" value="TreeGrafter"/>
</dbReference>
<dbReference type="GO" id="GO:0006260">
    <property type="term" value="P:DNA replication"/>
    <property type="evidence" value="ECO:0007669"/>
    <property type="project" value="UniProtKB-KW"/>
</dbReference>
<dbReference type="GO" id="GO:0042026">
    <property type="term" value="P:protein refolding"/>
    <property type="evidence" value="ECO:0007669"/>
    <property type="project" value="TreeGrafter"/>
</dbReference>
<dbReference type="GO" id="GO:0009408">
    <property type="term" value="P:response to heat"/>
    <property type="evidence" value="ECO:0007669"/>
    <property type="project" value="InterPro"/>
</dbReference>
<dbReference type="CDD" id="cd06257">
    <property type="entry name" value="DnaJ"/>
    <property type="match status" value="1"/>
</dbReference>
<dbReference type="CDD" id="cd10747">
    <property type="entry name" value="DnaJ_C"/>
    <property type="match status" value="1"/>
</dbReference>
<dbReference type="CDD" id="cd10719">
    <property type="entry name" value="DnaJ_zf"/>
    <property type="match status" value="1"/>
</dbReference>
<dbReference type="FunFam" id="1.10.287.110:FF:000034">
    <property type="entry name" value="Chaperone protein DnaJ"/>
    <property type="match status" value="1"/>
</dbReference>
<dbReference type="FunFam" id="2.60.260.20:FF:000005">
    <property type="entry name" value="Chaperone protein dnaJ 1, mitochondrial"/>
    <property type="match status" value="1"/>
</dbReference>
<dbReference type="FunFam" id="2.10.230.10:FF:000002">
    <property type="entry name" value="Molecular chaperone DnaJ"/>
    <property type="match status" value="1"/>
</dbReference>
<dbReference type="Gene3D" id="1.10.287.110">
    <property type="entry name" value="DnaJ domain"/>
    <property type="match status" value="1"/>
</dbReference>
<dbReference type="Gene3D" id="2.10.230.10">
    <property type="entry name" value="Heat shock protein DnaJ, cysteine-rich domain"/>
    <property type="match status" value="1"/>
</dbReference>
<dbReference type="Gene3D" id="2.60.260.20">
    <property type="entry name" value="Urease metallochaperone UreE, N-terminal domain"/>
    <property type="match status" value="2"/>
</dbReference>
<dbReference type="HAMAP" id="MF_01152">
    <property type="entry name" value="DnaJ"/>
    <property type="match status" value="1"/>
</dbReference>
<dbReference type="InterPro" id="IPR012724">
    <property type="entry name" value="DnaJ"/>
</dbReference>
<dbReference type="InterPro" id="IPR002939">
    <property type="entry name" value="DnaJ_C"/>
</dbReference>
<dbReference type="InterPro" id="IPR001623">
    <property type="entry name" value="DnaJ_domain"/>
</dbReference>
<dbReference type="InterPro" id="IPR018253">
    <property type="entry name" value="DnaJ_domain_CS"/>
</dbReference>
<dbReference type="InterPro" id="IPR008971">
    <property type="entry name" value="HSP40/DnaJ_pept-bd"/>
</dbReference>
<dbReference type="InterPro" id="IPR001305">
    <property type="entry name" value="HSP_DnaJ_Cys-rich_dom"/>
</dbReference>
<dbReference type="InterPro" id="IPR036410">
    <property type="entry name" value="HSP_DnaJ_Cys-rich_dom_sf"/>
</dbReference>
<dbReference type="InterPro" id="IPR036869">
    <property type="entry name" value="J_dom_sf"/>
</dbReference>
<dbReference type="NCBIfam" id="TIGR02349">
    <property type="entry name" value="DnaJ_bact"/>
    <property type="match status" value="1"/>
</dbReference>
<dbReference type="NCBIfam" id="NF008035">
    <property type="entry name" value="PRK10767.1"/>
    <property type="match status" value="1"/>
</dbReference>
<dbReference type="NCBIfam" id="NF010890">
    <property type="entry name" value="PRK14297.1"/>
    <property type="match status" value="1"/>
</dbReference>
<dbReference type="PANTHER" id="PTHR43096:SF48">
    <property type="entry name" value="CHAPERONE PROTEIN DNAJ"/>
    <property type="match status" value="1"/>
</dbReference>
<dbReference type="PANTHER" id="PTHR43096">
    <property type="entry name" value="DNAJ HOMOLOG 1, MITOCHONDRIAL-RELATED"/>
    <property type="match status" value="1"/>
</dbReference>
<dbReference type="Pfam" id="PF00226">
    <property type="entry name" value="DnaJ"/>
    <property type="match status" value="1"/>
</dbReference>
<dbReference type="Pfam" id="PF01556">
    <property type="entry name" value="DnaJ_C"/>
    <property type="match status" value="1"/>
</dbReference>
<dbReference type="Pfam" id="PF00684">
    <property type="entry name" value="DnaJ_CXXCXGXG"/>
    <property type="match status" value="1"/>
</dbReference>
<dbReference type="PRINTS" id="PR00625">
    <property type="entry name" value="JDOMAIN"/>
</dbReference>
<dbReference type="SMART" id="SM00271">
    <property type="entry name" value="DnaJ"/>
    <property type="match status" value="1"/>
</dbReference>
<dbReference type="SUPFAM" id="SSF46565">
    <property type="entry name" value="Chaperone J-domain"/>
    <property type="match status" value="1"/>
</dbReference>
<dbReference type="SUPFAM" id="SSF57938">
    <property type="entry name" value="DnaJ/Hsp40 cysteine-rich domain"/>
    <property type="match status" value="1"/>
</dbReference>
<dbReference type="SUPFAM" id="SSF49493">
    <property type="entry name" value="HSP40/DnaJ peptide-binding domain"/>
    <property type="match status" value="2"/>
</dbReference>
<dbReference type="PROSITE" id="PS00636">
    <property type="entry name" value="DNAJ_1"/>
    <property type="match status" value="1"/>
</dbReference>
<dbReference type="PROSITE" id="PS50076">
    <property type="entry name" value="DNAJ_2"/>
    <property type="match status" value="1"/>
</dbReference>
<dbReference type="PROSITE" id="PS51188">
    <property type="entry name" value="ZF_CR"/>
    <property type="match status" value="1"/>
</dbReference>
<gene>
    <name evidence="1" type="primary">dnaJ</name>
    <name type="ordered locus">CTC_02030</name>
</gene>
<name>DNAJ_CLOTE</name>
<keyword id="KW-0143">Chaperone</keyword>
<keyword id="KW-0963">Cytoplasm</keyword>
<keyword id="KW-0235">DNA replication</keyword>
<keyword id="KW-0479">Metal-binding</keyword>
<keyword id="KW-1185">Reference proteome</keyword>
<keyword id="KW-0677">Repeat</keyword>
<keyword id="KW-0346">Stress response</keyword>
<keyword id="KW-0862">Zinc</keyword>
<keyword id="KW-0863">Zinc-finger</keyword>
<evidence type="ECO:0000255" key="1">
    <source>
        <dbReference type="HAMAP-Rule" id="MF_01152"/>
    </source>
</evidence>
<organism>
    <name type="scientific">Clostridium tetani (strain Massachusetts / E88)</name>
    <dbReference type="NCBI Taxonomy" id="212717"/>
    <lineage>
        <taxon>Bacteria</taxon>
        <taxon>Bacillati</taxon>
        <taxon>Bacillota</taxon>
        <taxon>Clostridia</taxon>
        <taxon>Eubacteriales</taxon>
        <taxon>Clostridiaceae</taxon>
        <taxon>Clostridium</taxon>
    </lineage>
</organism>
<reference key="1">
    <citation type="journal article" date="2003" name="Proc. Natl. Acad. Sci. U.S.A.">
        <title>The genome sequence of Clostridium tetani, the causative agent of tetanus disease.</title>
        <authorList>
            <person name="Brueggemann H."/>
            <person name="Baeumer S."/>
            <person name="Fricke W.F."/>
            <person name="Wiezer A."/>
            <person name="Liesegang H."/>
            <person name="Decker I."/>
            <person name="Herzberg C."/>
            <person name="Martinez-Arias R."/>
            <person name="Merkl R."/>
            <person name="Henne A."/>
            <person name="Gottschalk G."/>
        </authorList>
    </citation>
    <scope>NUCLEOTIDE SEQUENCE [LARGE SCALE GENOMIC DNA]</scope>
    <source>
        <strain>Massachusetts / E88</strain>
    </source>
</reference>
<protein>
    <recommendedName>
        <fullName evidence="1">Chaperone protein DnaJ</fullName>
    </recommendedName>
</protein>